<protein>
    <recommendedName>
        <fullName evidence="1">Gamma-glutamyl phosphate reductase</fullName>
        <shortName evidence="1">GPR</shortName>
        <ecNumber evidence="1">1.2.1.41</ecNumber>
    </recommendedName>
    <alternativeName>
        <fullName evidence="1">Glutamate-5-semialdehyde dehydrogenase</fullName>
    </alternativeName>
    <alternativeName>
        <fullName evidence="1">Glutamyl-gamma-semialdehyde dehydrogenase</fullName>
        <shortName evidence="1">GSA dehydrogenase</shortName>
    </alternativeName>
</protein>
<sequence length="420" mass="45153">MSNTQKQLALAKAAKKSVNTADTEEKNRALLAMADSLEAAAADILAANRQDLEAAAGNIPESMTDRLLLDGKRICAMADGIRAVAALPDPVGEILETSTLPNGLEIVKKRVAMGVIGIIYESRPNVTSDAAALALKSGSAVVLRSGKDAFQSARAIVAALKAGLAQTRIDPDALQLIEDTGREGSYEMMRAKDYLDLLIPRGGAGLIRAVVENAVVPVIETGTGIVHIYIDKDADWDKALRIVYNAKTSRPSVCNSMEVLLVHEDIAADFLPKLERLLVRDRIEAGLPPVRFRLDPQAARHIGGEAAGADDFDTEFLDYILAVKTVASVEEAVWHIETHSTHHSDGIVTENRHAADYFTTHIDSAAVYVNASTRFTDGGEFGLGCEMGISTQKLHARGPMGLKELTSYKYIVQGTGQVRE</sequence>
<comment type="function">
    <text evidence="1">Catalyzes the NADPH-dependent reduction of L-glutamate 5-phosphate into L-glutamate 5-semialdehyde and phosphate. The product spontaneously undergoes cyclization to form 1-pyrroline-5-carboxylate.</text>
</comment>
<comment type="catalytic activity">
    <reaction evidence="1">
        <text>L-glutamate 5-semialdehyde + phosphate + NADP(+) = L-glutamyl 5-phosphate + NADPH + H(+)</text>
        <dbReference type="Rhea" id="RHEA:19541"/>
        <dbReference type="ChEBI" id="CHEBI:15378"/>
        <dbReference type="ChEBI" id="CHEBI:43474"/>
        <dbReference type="ChEBI" id="CHEBI:57783"/>
        <dbReference type="ChEBI" id="CHEBI:58066"/>
        <dbReference type="ChEBI" id="CHEBI:58274"/>
        <dbReference type="ChEBI" id="CHEBI:58349"/>
        <dbReference type="EC" id="1.2.1.41"/>
    </reaction>
</comment>
<comment type="pathway">
    <text evidence="1">Amino-acid biosynthesis; L-proline biosynthesis; L-glutamate 5-semialdehyde from L-glutamate: step 2/2.</text>
</comment>
<comment type="subcellular location">
    <subcellularLocation>
        <location evidence="1">Cytoplasm</location>
    </subcellularLocation>
</comment>
<comment type="similarity">
    <text evidence="1">Belongs to the gamma-glutamyl phosphate reductase family.</text>
</comment>
<gene>
    <name evidence="1" type="primary">proA</name>
    <name type="ordered locus">NMCC_0986</name>
</gene>
<reference key="1">
    <citation type="journal article" date="2008" name="Genomics">
        <title>Characterization of ST-4821 complex, a unique Neisseria meningitidis clone.</title>
        <authorList>
            <person name="Peng J."/>
            <person name="Yang L."/>
            <person name="Yang F."/>
            <person name="Yang J."/>
            <person name="Yan Y."/>
            <person name="Nie H."/>
            <person name="Zhang X."/>
            <person name="Xiong Z."/>
            <person name="Jiang Y."/>
            <person name="Cheng F."/>
            <person name="Xu X."/>
            <person name="Chen S."/>
            <person name="Sun L."/>
            <person name="Li W."/>
            <person name="Shen Y."/>
            <person name="Shao Z."/>
            <person name="Liang X."/>
            <person name="Xu J."/>
            <person name="Jin Q."/>
        </authorList>
    </citation>
    <scope>NUCLEOTIDE SEQUENCE [LARGE SCALE GENOMIC DNA]</scope>
    <source>
        <strain>053442</strain>
    </source>
</reference>
<dbReference type="EC" id="1.2.1.41" evidence="1"/>
<dbReference type="EMBL" id="CP000381">
    <property type="protein sequence ID" value="ABX73166.1"/>
    <property type="molecule type" value="Genomic_DNA"/>
</dbReference>
<dbReference type="RefSeq" id="WP_002255875.1">
    <property type="nucleotide sequence ID" value="NC_010120.1"/>
</dbReference>
<dbReference type="SMR" id="A9LYY9"/>
<dbReference type="KEGG" id="nmn:NMCC_0986"/>
<dbReference type="HOGENOM" id="CLU_030231_0_0_4"/>
<dbReference type="UniPathway" id="UPA00098">
    <property type="reaction ID" value="UER00360"/>
</dbReference>
<dbReference type="Proteomes" id="UP000001177">
    <property type="component" value="Chromosome"/>
</dbReference>
<dbReference type="GO" id="GO:0005737">
    <property type="term" value="C:cytoplasm"/>
    <property type="evidence" value="ECO:0007669"/>
    <property type="project" value="UniProtKB-SubCell"/>
</dbReference>
<dbReference type="GO" id="GO:0004350">
    <property type="term" value="F:glutamate-5-semialdehyde dehydrogenase activity"/>
    <property type="evidence" value="ECO:0007669"/>
    <property type="project" value="UniProtKB-UniRule"/>
</dbReference>
<dbReference type="GO" id="GO:0050661">
    <property type="term" value="F:NADP binding"/>
    <property type="evidence" value="ECO:0007669"/>
    <property type="project" value="InterPro"/>
</dbReference>
<dbReference type="GO" id="GO:0055129">
    <property type="term" value="P:L-proline biosynthetic process"/>
    <property type="evidence" value="ECO:0007669"/>
    <property type="project" value="UniProtKB-UniRule"/>
</dbReference>
<dbReference type="CDD" id="cd07079">
    <property type="entry name" value="ALDH_F18-19_ProA-GPR"/>
    <property type="match status" value="1"/>
</dbReference>
<dbReference type="FunFam" id="3.40.309.10:FF:000006">
    <property type="entry name" value="Gamma-glutamyl phosphate reductase"/>
    <property type="match status" value="1"/>
</dbReference>
<dbReference type="Gene3D" id="3.40.605.10">
    <property type="entry name" value="Aldehyde Dehydrogenase, Chain A, domain 1"/>
    <property type="match status" value="1"/>
</dbReference>
<dbReference type="Gene3D" id="3.40.309.10">
    <property type="entry name" value="Aldehyde Dehydrogenase, Chain A, domain 2"/>
    <property type="match status" value="1"/>
</dbReference>
<dbReference type="HAMAP" id="MF_00412">
    <property type="entry name" value="ProA"/>
    <property type="match status" value="1"/>
</dbReference>
<dbReference type="InterPro" id="IPR016161">
    <property type="entry name" value="Ald_DH/histidinol_DH"/>
</dbReference>
<dbReference type="InterPro" id="IPR016163">
    <property type="entry name" value="Ald_DH_C"/>
</dbReference>
<dbReference type="InterPro" id="IPR016162">
    <property type="entry name" value="Ald_DH_N"/>
</dbReference>
<dbReference type="InterPro" id="IPR015590">
    <property type="entry name" value="Aldehyde_DH_dom"/>
</dbReference>
<dbReference type="InterPro" id="IPR020593">
    <property type="entry name" value="G-glutamylP_reductase_CS"/>
</dbReference>
<dbReference type="InterPro" id="IPR012134">
    <property type="entry name" value="Glu-5-SA_DH"/>
</dbReference>
<dbReference type="InterPro" id="IPR000965">
    <property type="entry name" value="GPR_dom"/>
</dbReference>
<dbReference type="NCBIfam" id="NF001221">
    <property type="entry name" value="PRK00197.1"/>
    <property type="match status" value="1"/>
</dbReference>
<dbReference type="NCBIfam" id="TIGR00407">
    <property type="entry name" value="proA"/>
    <property type="match status" value="1"/>
</dbReference>
<dbReference type="PANTHER" id="PTHR11063:SF8">
    <property type="entry name" value="DELTA-1-PYRROLINE-5-CARBOXYLATE SYNTHASE"/>
    <property type="match status" value="1"/>
</dbReference>
<dbReference type="PANTHER" id="PTHR11063">
    <property type="entry name" value="GLUTAMATE SEMIALDEHYDE DEHYDROGENASE"/>
    <property type="match status" value="1"/>
</dbReference>
<dbReference type="Pfam" id="PF00171">
    <property type="entry name" value="Aldedh"/>
    <property type="match status" value="1"/>
</dbReference>
<dbReference type="PIRSF" id="PIRSF000151">
    <property type="entry name" value="GPR"/>
    <property type="match status" value="1"/>
</dbReference>
<dbReference type="SUPFAM" id="SSF53720">
    <property type="entry name" value="ALDH-like"/>
    <property type="match status" value="1"/>
</dbReference>
<dbReference type="PROSITE" id="PS01223">
    <property type="entry name" value="PROA"/>
    <property type="match status" value="1"/>
</dbReference>
<accession>A9LYY9</accession>
<proteinExistence type="inferred from homology"/>
<name>PROA_NEIM0</name>
<evidence type="ECO:0000255" key="1">
    <source>
        <dbReference type="HAMAP-Rule" id="MF_00412"/>
    </source>
</evidence>
<keyword id="KW-0028">Amino-acid biosynthesis</keyword>
<keyword id="KW-0963">Cytoplasm</keyword>
<keyword id="KW-0521">NADP</keyword>
<keyword id="KW-0560">Oxidoreductase</keyword>
<keyword id="KW-0641">Proline biosynthesis</keyword>
<feature type="chain" id="PRO_1000080488" description="Gamma-glutamyl phosphate reductase">
    <location>
        <begin position="1"/>
        <end position="420"/>
    </location>
</feature>
<organism>
    <name type="scientific">Neisseria meningitidis serogroup C (strain 053442)</name>
    <dbReference type="NCBI Taxonomy" id="374833"/>
    <lineage>
        <taxon>Bacteria</taxon>
        <taxon>Pseudomonadati</taxon>
        <taxon>Pseudomonadota</taxon>
        <taxon>Betaproteobacteria</taxon>
        <taxon>Neisseriales</taxon>
        <taxon>Neisseriaceae</taxon>
        <taxon>Neisseria</taxon>
    </lineage>
</organism>